<proteinExistence type="inferred from homology"/>
<accession>Q8KX34</accession>
<comment type="function">
    <text evidence="1">NDH-1 shuttles electrons from an unknown electron donor, via FMN and iron-sulfur (Fe-S) centers, to quinones in the respiratory and/or the photosynthetic chain. The immediate electron acceptor for the enzyme in this species is believed to be plastoquinone. Couples the redox reaction to proton translocation, and thus conserves the redox energy in a proton gradient. Cyanobacterial NDH-1 also plays a role in inorganic carbon-concentration.</text>
</comment>
<comment type="catalytic activity">
    <reaction evidence="1">
        <text>a plastoquinone + NADH + (n+1) H(+)(in) = a plastoquinol + NAD(+) + n H(+)(out)</text>
        <dbReference type="Rhea" id="RHEA:42608"/>
        <dbReference type="Rhea" id="RHEA-COMP:9561"/>
        <dbReference type="Rhea" id="RHEA-COMP:9562"/>
        <dbReference type="ChEBI" id="CHEBI:15378"/>
        <dbReference type="ChEBI" id="CHEBI:17757"/>
        <dbReference type="ChEBI" id="CHEBI:57540"/>
        <dbReference type="ChEBI" id="CHEBI:57945"/>
        <dbReference type="ChEBI" id="CHEBI:62192"/>
    </reaction>
</comment>
<comment type="catalytic activity">
    <reaction evidence="1">
        <text>a plastoquinone + NADPH + (n+1) H(+)(in) = a plastoquinol + NADP(+) + n H(+)(out)</text>
        <dbReference type="Rhea" id="RHEA:42612"/>
        <dbReference type="Rhea" id="RHEA-COMP:9561"/>
        <dbReference type="Rhea" id="RHEA-COMP:9562"/>
        <dbReference type="ChEBI" id="CHEBI:15378"/>
        <dbReference type="ChEBI" id="CHEBI:17757"/>
        <dbReference type="ChEBI" id="CHEBI:57783"/>
        <dbReference type="ChEBI" id="CHEBI:58349"/>
        <dbReference type="ChEBI" id="CHEBI:62192"/>
    </reaction>
</comment>
<comment type="subunit">
    <text evidence="1">NDH-1 can be composed of about 15 different subunits; different subcomplexes with different compositions have been identified which probably have different functions.</text>
</comment>
<comment type="subcellular location">
    <subcellularLocation>
        <location evidence="1">Cellular thylakoid membrane</location>
        <topology evidence="1">Multi-pass membrane protein</topology>
    </subcellularLocation>
</comment>
<comment type="similarity">
    <text evidence="1">Belongs to the complex I NdhL subunit family.</text>
</comment>
<evidence type="ECO:0000255" key="1">
    <source>
        <dbReference type="HAMAP-Rule" id="MF_01355"/>
    </source>
</evidence>
<reference key="1">
    <citation type="submission" date="2001-05" db="EMBL/GenBank/DDBJ databases">
        <title>An analysis of forty genes encoding electron transport proteins from Synechococcus sp. PCC 7002: a comparative study of electron transport proteins from cyanobacteria and chloroplasts.</title>
        <authorList>
            <person name="Nomura C.T."/>
            <person name="Persson S."/>
            <person name="Zhao J."/>
            <person name="Bryant D.A."/>
        </authorList>
    </citation>
    <scope>NUCLEOTIDE SEQUENCE [GENOMIC DNA]</scope>
</reference>
<reference key="2">
    <citation type="submission" date="2008-02" db="EMBL/GenBank/DDBJ databases">
        <title>Complete sequence of Synechococcus sp. PCC 7002.</title>
        <authorList>
            <person name="Li T."/>
            <person name="Zhao J."/>
            <person name="Zhao C."/>
            <person name="Liu Z."/>
            <person name="Zhao F."/>
            <person name="Marquardt J."/>
            <person name="Nomura C.T."/>
            <person name="Persson S."/>
            <person name="Detter J.C."/>
            <person name="Richardson P.M."/>
            <person name="Lanz C."/>
            <person name="Schuster S.C."/>
            <person name="Wang J."/>
            <person name="Li S."/>
            <person name="Huang X."/>
            <person name="Cai T."/>
            <person name="Yu Z."/>
            <person name="Luo J."/>
            <person name="Zhao J."/>
            <person name="Bryant D.A."/>
        </authorList>
    </citation>
    <scope>NUCLEOTIDE SEQUENCE [LARGE SCALE GENOMIC DNA]</scope>
    <source>
        <strain>ATCC 27264 / PCC 7002 / PR-6</strain>
    </source>
</reference>
<feature type="chain" id="PRO_0000353686" description="NAD(P)H-quinone oxidoreductase subunit L">
    <location>
        <begin position="1"/>
        <end position="77"/>
    </location>
</feature>
<feature type="transmembrane region" description="Helical" evidence="1">
    <location>
        <begin position="10"/>
        <end position="30"/>
    </location>
</feature>
<feature type="transmembrane region" description="Helical" evidence="1">
    <location>
        <begin position="48"/>
        <end position="68"/>
    </location>
</feature>
<sequence>MPFDIPVETLLIATLYLSLSVTYLLVLPAGLYFYLNNRWYVASSIERLVMYFFVFFLFPGMLLLSPFLNFRPRRREV</sequence>
<gene>
    <name evidence="1" type="primary">ndhL</name>
    <name type="ordered locus">SYNPCC7002_A0560</name>
</gene>
<keyword id="KW-0472">Membrane</keyword>
<keyword id="KW-0520">NAD</keyword>
<keyword id="KW-0521">NADP</keyword>
<keyword id="KW-0618">Plastoquinone</keyword>
<keyword id="KW-0874">Quinone</keyword>
<keyword id="KW-1185">Reference proteome</keyword>
<keyword id="KW-0793">Thylakoid</keyword>
<keyword id="KW-1278">Translocase</keyword>
<keyword id="KW-0812">Transmembrane</keyword>
<keyword id="KW-1133">Transmembrane helix</keyword>
<keyword id="KW-0813">Transport</keyword>
<name>NDHL_PICP2</name>
<protein>
    <recommendedName>
        <fullName evidence="1">NAD(P)H-quinone oxidoreductase subunit L</fullName>
        <ecNumber evidence="1">7.1.1.-</ecNumber>
    </recommendedName>
    <alternativeName>
        <fullName evidence="1">NAD(P)H dehydrogenase I subunit L</fullName>
    </alternativeName>
    <alternativeName>
        <fullName>NDH-1 subunit L</fullName>
    </alternativeName>
    <alternativeName>
        <fullName>NDH-L</fullName>
    </alternativeName>
</protein>
<dbReference type="EC" id="7.1.1.-" evidence="1"/>
<dbReference type="EMBL" id="AF381042">
    <property type="protein sequence ID" value="AAN03559.1"/>
    <property type="molecule type" value="Genomic_DNA"/>
</dbReference>
<dbReference type="EMBL" id="CP000951">
    <property type="protein sequence ID" value="ACA98567.1"/>
    <property type="molecule type" value="Genomic_DNA"/>
</dbReference>
<dbReference type="RefSeq" id="WP_012306191.1">
    <property type="nucleotide sequence ID" value="NZ_JAHHPU010000001.1"/>
</dbReference>
<dbReference type="SMR" id="Q8KX34"/>
<dbReference type="STRING" id="32049.SYNPCC7002_A0560"/>
<dbReference type="KEGG" id="syp:SYNPCC7002_A0560"/>
<dbReference type="eggNOG" id="ENOG5032ZM4">
    <property type="taxonomic scope" value="Bacteria"/>
</dbReference>
<dbReference type="HOGENOM" id="CLU_171077_0_0_3"/>
<dbReference type="Proteomes" id="UP000001688">
    <property type="component" value="Chromosome"/>
</dbReference>
<dbReference type="GO" id="GO:0031676">
    <property type="term" value="C:plasma membrane-derived thylakoid membrane"/>
    <property type="evidence" value="ECO:0007669"/>
    <property type="project" value="UniProtKB-SubCell"/>
</dbReference>
<dbReference type="GO" id="GO:0016655">
    <property type="term" value="F:oxidoreductase activity, acting on NAD(P)H, quinone or similar compound as acceptor"/>
    <property type="evidence" value="ECO:0007669"/>
    <property type="project" value="UniProtKB-UniRule"/>
</dbReference>
<dbReference type="GO" id="GO:0048038">
    <property type="term" value="F:quinone binding"/>
    <property type="evidence" value="ECO:0007669"/>
    <property type="project" value="UniProtKB-KW"/>
</dbReference>
<dbReference type="HAMAP" id="MF_01355">
    <property type="entry name" value="NDH1_NDH1L"/>
    <property type="match status" value="1"/>
</dbReference>
<dbReference type="InterPro" id="IPR019654">
    <property type="entry name" value="NADH-quinone_OxRdatse_su_L"/>
</dbReference>
<dbReference type="PANTHER" id="PTHR36727">
    <property type="entry name" value="NAD(P)H-QUINONE OXIDOREDUCTASE SUBUNIT L, CHLOROPLASTIC"/>
    <property type="match status" value="1"/>
</dbReference>
<dbReference type="PANTHER" id="PTHR36727:SF2">
    <property type="entry name" value="NAD(P)H-QUINONE OXIDOREDUCTASE SUBUNIT L, CHLOROPLASTIC"/>
    <property type="match status" value="1"/>
</dbReference>
<dbReference type="Pfam" id="PF10716">
    <property type="entry name" value="NdhL"/>
    <property type="match status" value="1"/>
</dbReference>
<organism>
    <name type="scientific">Picosynechococcus sp. (strain ATCC 27264 / PCC 7002 / PR-6)</name>
    <name type="common">Agmenellum quadruplicatum</name>
    <dbReference type="NCBI Taxonomy" id="32049"/>
    <lineage>
        <taxon>Bacteria</taxon>
        <taxon>Bacillati</taxon>
        <taxon>Cyanobacteriota</taxon>
        <taxon>Cyanophyceae</taxon>
        <taxon>Oscillatoriophycideae</taxon>
        <taxon>Chroococcales</taxon>
        <taxon>Geminocystaceae</taxon>
        <taxon>Picosynechococcus</taxon>
    </lineage>
</organism>